<reference key="1">
    <citation type="journal article" date="1990" name="Toxicon">
        <title>Amino acid sequences of eight phospholipases A2 from the venom of Australian king brown snake, Pseudechis australis.</title>
        <authorList>
            <person name="Takasaki C."/>
            <person name="Yutani F."/>
            <person name="Kajiyashiki T."/>
        </authorList>
    </citation>
    <scope>PROTEIN SEQUENCE</scope>
    <scope>TOXIC DOSE</scope>
    <source>
        <tissue>Venom</tissue>
    </source>
</reference>
<organism>
    <name type="scientific">Pseudechis australis</name>
    <name type="common">Mulga snake</name>
    <name type="synonym">King brown snake</name>
    <dbReference type="NCBI Taxonomy" id="8670"/>
    <lineage>
        <taxon>Eukaryota</taxon>
        <taxon>Metazoa</taxon>
        <taxon>Chordata</taxon>
        <taxon>Craniata</taxon>
        <taxon>Vertebrata</taxon>
        <taxon>Euteleostomi</taxon>
        <taxon>Lepidosauria</taxon>
        <taxon>Squamata</taxon>
        <taxon>Bifurcata</taxon>
        <taxon>Unidentata</taxon>
        <taxon>Episquamata</taxon>
        <taxon>Toxicofera</taxon>
        <taxon>Serpentes</taxon>
        <taxon>Colubroidea</taxon>
        <taxon>Elapidae</taxon>
        <taxon>Hydrophiinae</taxon>
        <taxon>Pseudechis</taxon>
    </lineage>
</organism>
<comment type="function">
    <text>PLA2 catalyzes the calcium-dependent hydrolysis of the 2-acyl groups in 3-sn-phosphoglycerides.</text>
</comment>
<comment type="catalytic activity">
    <reaction evidence="2 3">
        <text>a 1,2-diacyl-sn-glycero-3-phosphocholine + H2O = a 1-acyl-sn-glycero-3-phosphocholine + a fatty acid + H(+)</text>
        <dbReference type="Rhea" id="RHEA:15801"/>
        <dbReference type="ChEBI" id="CHEBI:15377"/>
        <dbReference type="ChEBI" id="CHEBI:15378"/>
        <dbReference type="ChEBI" id="CHEBI:28868"/>
        <dbReference type="ChEBI" id="CHEBI:57643"/>
        <dbReference type="ChEBI" id="CHEBI:58168"/>
        <dbReference type="EC" id="3.1.1.4"/>
    </reaction>
</comment>
<comment type="cofactor">
    <cofactor evidence="1">
        <name>Ca(2+)</name>
        <dbReference type="ChEBI" id="CHEBI:29108"/>
    </cofactor>
    <text evidence="1">Binds 1 Ca(2+) ion.</text>
</comment>
<comment type="subcellular location">
    <subcellularLocation>
        <location>Secreted</location>
    </subcellularLocation>
</comment>
<comment type="tissue specificity">
    <text>Expressed by the venom gland.</text>
</comment>
<comment type="toxic dose">
    <text evidence="4">LD(50) is 0.22 mg/kg by intravenous injection.</text>
</comment>
<comment type="similarity">
    <text evidence="5">Belongs to the phospholipase A2 family. Group I subfamily. D49 sub-subfamily.</text>
</comment>
<protein>
    <recommendedName>
        <fullName>Basic phospholipase A2 PA-12C</fullName>
        <shortName>svPLA2</shortName>
        <ecNumber>3.1.1.4</ecNumber>
    </recommendedName>
    <alternativeName>
        <fullName>Phosphatidylcholine 2-acylhydrolase</fullName>
    </alternativeName>
</protein>
<keyword id="KW-0106">Calcium</keyword>
<keyword id="KW-0903">Direct protein sequencing</keyword>
<keyword id="KW-1015">Disulfide bond</keyword>
<keyword id="KW-0378">Hydrolase</keyword>
<keyword id="KW-0442">Lipid degradation</keyword>
<keyword id="KW-0443">Lipid metabolism</keyword>
<keyword id="KW-0479">Metal-binding</keyword>
<keyword id="KW-0964">Secreted</keyword>
<sequence length="118" mass="13009">NLIQFGNMIQCANKGSRPSLDYADYGCYCGWGGSGTPVDELDRCCQTHDNCYEQAGKKGCFPKLTLYSWKCTGNAPTCNSKPGCKRFVCACDAAAAKCFAKAPYKKENYNIDTKKRCK</sequence>
<evidence type="ECO:0000250" key="1"/>
<evidence type="ECO:0000255" key="2">
    <source>
        <dbReference type="PROSITE-ProRule" id="PRU10035"/>
    </source>
</evidence>
<evidence type="ECO:0000255" key="3">
    <source>
        <dbReference type="PROSITE-ProRule" id="PRU10036"/>
    </source>
</evidence>
<evidence type="ECO:0000269" key="4">
    <source>
    </source>
</evidence>
<evidence type="ECO:0000305" key="5"/>
<name>PA2BC_PSEAU</name>
<feature type="chain" id="PRO_0000161688" description="Basic phospholipase A2 PA-12C">
    <location>
        <begin position="1"/>
        <end position="118"/>
    </location>
</feature>
<feature type="active site" evidence="1">
    <location>
        <position position="48"/>
    </location>
</feature>
<feature type="active site" evidence="1">
    <location>
        <position position="92"/>
    </location>
</feature>
<feature type="binding site" evidence="1">
    <location>
        <position position="28"/>
    </location>
    <ligand>
        <name>Ca(2+)</name>
        <dbReference type="ChEBI" id="CHEBI:29108"/>
    </ligand>
</feature>
<feature type="binding site" evidence="1">
    <location>
        <position position="30"/>
    </location>
    <ligand>
        <name>Ca(2+)</name>
        <dbReference type="ChEBI" id="CHEBI:29108"/>
    </ligand>
</feature>
<feature type="binding site" evidence="1">
    <location>
        <position position="32"/>
    </location>
    <ligand>
        <name>Ca(2+)</name>
        <dbReference type="ChEBI" id="CHEBI:29108"/>
    </ligand>
</feature>
<feature type="binding site" evidence="1">
    <location>
        <position position="49"/>
    </location>
    <ligand>
        <name>Ca(2+)</name>
        <dbReference type="ChEBI" id="CHEBI:29108"/>
    </ligand>
</feature>
<feature type="disulfide bond" evidence="1">
    <location>
        <begin position="11"/>
        <end position="71"/>
    </location>
</feature>
<feature type="disulfide bond" evidence="1">
    <location>
        <begin position="27"/>
        <end position="117"/>
    </location>
</feature>
<feature type="disulfide bond" evidence="1">
    <location>
        <begin position="29"/>
        <end position="45"/>
    </location>
</feature>
<feature type="disulfide bond" evidence="1">
    <location>
        <begin position="44"/>
        <end position="98"/>
    </location>
</feature>
<feature type="disulfide bond" evidence="1">
    <location>
        <begin position="51"/>
        <end position="91"/>
    </location>
</feature>
<feature type="disulfide bond" evidence="1">
    <location>
        <begin position="60"/>
        <end position="84"/>
    </location>
</feature>
<feature type="disulfide bond" evidence="1">
    <location>
        <begin position="78"/>
        <end position="89"/>
    </location>
</feature>
<proteinExistence type="evidence at protein level"/>
<accession>P20256</accession>
<dbReference type="EC" id="3.1.1.4"/>
<dbReference type="PIR" id="G34860">
    <property type="entry name" value="G34860"/>
</dbReference>
<dbReference type="SMR" id="P20256"/>
<dbReference type="GO" id="GO:0005576">
    <property type="term" value="C:extracellular region"/>
    <property type="evidence" value="ECO:0007669"/>
    <property type="project" value="UniProtKB-SubCell"/>
</dbReference>
<dbReference type="GO" id="GO:0005509">
    <property type="term" value="F:calcium ion binding"/>
    <property type="evidence" value="ECO:0007669"/>
    <property type="project" value="InterPro"/>
</dbReference>
<dbReference type="GO" id="GO:0047498">
    <property type="term" value="F:calcium-dependent phospholipase A2 activity"/>
    <property type="evidence" value="ECO:0007669"/>
    <property type="project" value="TreeGrafter"/>
</dbReference>
<dbReference type="GO" id="GO:0005543">
    <property type="term" value="F:phospholipid binding"/>
    <property type="evidence" value="ECO:0007669"/>
    <property type="project" value="TreeGrafter"/>
</dbReference>
<dbReference type="GO" id="GO:0050482">
    <property type="term" value="P:arachidonate secretion"/>
    <property type="evidence" value="ECO:0007669"/>
    <property type="project" value="InterPro"/>
</dbReference>
<dbReference type="GO" id="GO:0016042">
    <property type="term" value="P:lipid catabolic process"/>
    <property type="evidence" value="ECO:0007669"/>
    <property type="project" value="UniProtKB-KW"/>
</dbReference>
<dbReference type="GO" id="GO:0006644">
    <property type="term" value="P:phospholipid metabolic process"/>
    <property type="evidence" value="ECO:0007669"/>
    <property type="project" value="InterPro"/>
</dbReference>
<dbReference type="CDD" id="cd00125">
    <property type="entry name" value="PLA2c"/>
    <property type="match status" value="1"/>
</dbReference>
<dbReference type="FunFam" id="1.20.90.10:FF:000007">
    <property type="entry name" value="Acidic phospholipase A2"/>
    <property type="match status" value="1"/>
</dbReference>
<dbReference type="Gene3D" id="1.20.90.10">
    <property type="entry name" value="Phospholipase A2 domain"/>
    <property type="match status" value="1"/>
</dbReference>
<dbReference type="InterPro" id="IPR001211">
    <property type="entry name" value="PLipase_A2"/>
</dbReference>
<dbReference type="InterPro" id="IPR033112">
    <property type="entry name" value="PLipase_A2_Asp_AS"/>
</dbReference>
<dbReference type="InterPro" id="IPR016090">
    <property type="entry name" value="PLipase_A2_dom"/>
</dbReference>
<dbReference type="InterPro" id="IPR036444">
    <property type="entry name" value="PLipase_A2_dom_sf"/>
</dbReference>
<dbReference type="InterPro" id="IPR033113">
    <property type="entry name" value="PLipase_A2_His_AS"/>
</dbReference>
<dbReference type="PANTHER" id="PTHR11716:SF106">
    <property type="entry name" value="PHOSPHOLIPASE A2 A2-ACTITOXIN-UCS2A-LIKE"/>
    <property type="match status" value="1"/>
</dbReference>
<dbReference type="PANTHER" id="PTHR11716">
    <property type="entry name" value="PHOSPHOLIPASE A2 FAMILY MEMBER"/>
    <property type="match status" value="1"/>
</dbReference>
<dbReference type="Pfam" id="PF00068">
    <property type="entry name" value="Phospholip_A2_1"/>
    <property type="match status" value="1"/>
</dbReference>
<dbReference type="PRINTS" id="PR00389">
    <property type="entry name" value="PHPHLIPASEA2"/>
</dbReference>
<dbReference type="SMART" id="SM00085">
    <property type="entry name" value="PA2c"/>
    <property type="match status" value="1"/>
</dbReference>
<dbReference type="SUPFAM" id="SSF48619">
    <property type="entry name" value="Phospholipase A2, PLA2"/>
    <property type="match status" value="1"/>
</dbReference>
<dbReference type="PROSITE" id="PS00119">
    <property type="entry name" value="PA2_ASP"/>
    <property type="match status" value="1"/>
</dbReference>
<dbReference type="PROSITE" id="PS00118">
    <property type="entry name" value="PA2_HIS"/>
    <property type="match status" value="1"/>
</dbReference>